<reference key="1">
    <citation type="submission" date="2007-05" db="EMBL/GenBank/DDBJ databases">
        <title>Complete sequence of Pseudomonas putida F1.</title>
        <authorList>
            <consortium name="US DOE Joint Genome Institute"/>
            <person name="Copeland A."/>
            <person name="Lucas S."/>
            <person name="Lapidus A."/>
            <person name="Barry K."/>
            <person name="Detter J.C."/>
            <person name="Glavina del Rio T."/>
            <person name="Hammon N."/>
            <person name="Israni S."/>
            <person name="Dalin E."/>
            <person name="Tice H."/>
            <person name="Pitluck S."/>
            <person name="Chain P."/>
            <person name="Malfatti S."/>
            <person name="Shin M."/>
            <person name="Vergez L."/>
            <person name="Schmutz J."/>
            <person name="Larimer F."/>
            <person name="Land M."/>
            <person name="Hauser L."/>
            <person name="Kyrpides N."/>
            <person name="Lykidis A."/>
            <person name="Parales R."/>
            <person name="Richardson P."/>
        </authorList>
    </citation>
    <scope>NUCLEOTIDE SEQUENCE [LARGE SCALE GENOMIC DNA]</scope>
    <source>
        <strain>ATCC 700007 / DSM 6899 / JCM 31910 / BCRC 17059 / LMG 24140 / F1</strain>
    </source>
</reference>
<feature type="chain" id="PRO_1000070685" description="Urease subunit alpha">
    <location>
        <begin position="1"/>
        <end position="567"/>
    </location>
</feature>
<feature type="domain" description="Urease" evidence="1">
    <location>
        <begin position="129"/>
        <end position="567"/>
    </location>
</feature>
<feature type="active site" description="Proton donor" evidence="1">
    <location>
        <position position="320"/>
    </location>
</feature>
<feature type="binding site" evidence="1">
    <location>
        <position position="134"/>
    </location>
    <ligand>
        <name>Ni(2+)</name>
        <dbReference type="ChEBI" id="CHEBI:49786"/>
        <label>1</label>
    </ligand>
</feature>
<feature type="binding site" evidence="1">
    <location>
        <position position="136"/>
    </location>
    <ligand>
        <name>Ni(2+)</name>
        <dbReference type="ChEBI" id="CHEBI:49786"/>
        <label>1</label>
    </ligand>
</feature>
<feature type="binding site" description="via carbamate group" evidence="1">
    <location>
        <position position="217"/>
    </location>
    <ligand>
        <name>Ni(2+)</name>
        <dbReference type="ChEBI" id="CHEBI:49786"/>
        <label>1</label>
    </ligand>
</feature>
<feature type="binding site" description="via carbamate group" evidence="1">
    <location>
        <position position="217"/>
    </location>
    <ligand>
        <name>Ni(2+)</name>
        <dbReference type="ChEBI" id="CHEBI:49786"/>
        <label>2</label>
    </ligand>
</feature>
<feature type="binding site" evidence="1">
    <location>
        <position position="219"/>
    </location>
    <ligand>
        <name>substrate</name>
    </ligand>
</feature>
<feature type="binding site" evidence="1">
    <location>
        <position position="246"/>
    </location>
    <ligand>
        <name>Ni(2+)</name>
        <dbReference type="ChEBI" id="CHEBI:49786"/>
        <label>2</label>
    </ligand>
</feature>
<feature type="binding site" evidence="1">
    <location>
        <position position="272"/>
    </location>
    <ligand>
        <name>Ni(2+)</name>
        <dbReference type="ChEBI" id="CHEBI:49786"/>
        <label>2</label>
    </ligand>
</feature>
<feature type="binding site" evidence="1">
    <location>
        <position position="360"/>
    </location>
    <ligand>
        <name>Ni(2+)</name>
        <dbReference type="ChEBI" id="CHEBI:49786"/>
        <label>1</label>
    </ligand>
</feature>
<feature type="modified residue" description="N6-carboxylysine" evidence="1">
    <location>
        <position position="217"/>
    </location>
</feature>
<protein>
    <recommendedName>
        <fullName evidence="1">Urease subunit alpha</fullName>
        <ecNumber evidence="1">3.5.1.5</ecNumber>
    </recommendedName>
    <alternativeName>
        <fullName evidence="1">Urea amidohydrolase subunit alpha</fullName>
    </alternativeName>
</protein>
<comment type="catalytic activity">
    <reaction evidence="1">
        <text>urea + 2 H2O + H(+) = hydrogencarbonate + 2 NH4(+)</text>
        <dbReference type="Rhea" id="RHEA:20557"/>
        <dbReference type="ChEBI" id="CHEBI:15377"/>
        <dbReference type="ChEBI" id="CHEBI:15378"/>
        <dbReference type="ChEBI" id="CHEBI:16199"/>
        <dbReference type="ChEBI" id="CHEBI:17544"/>
        <dbReference type="ChEBI" id="CHEBI:28938"/>
        <dbReference type="EC" id="3.5.1.5"/>
    </reaction>
</comment>
<comment type="cofactor">
    <cofactor evidence="1">
        <name>Ni cation</name>
        <dbReference type="ChEBI" id="CHEBI:25516"/>
    </cofactor>
    <text evidence="1">Binds 2 nickel ions per subunit.</text>
</comment>
<comment type="pathway">
    <text evidence="1">Nitrogen metabolism; urea degradation; CO(2) and NH(3) from urea (urease route): step 1/1.</text>
</comment>
<comment type="subunit">
    <text evidence="1">Heterotrimer of UreA (gamma), UreB (beta) and UreC (alpha) subunits. Three heterotrimers associate to form the active enzyme.</text>
</comment>
<comment type="subcellular location">
    <subcellularLocation>
        <location evidence="1">Cytoplasm</location>
    </subcellularLocation>
</comment>
<comment type="PTM">
    <text evidence="1">Carboxylation allows a single lysine to coordinate two nickel ions.</text>
</comment>
<comment type="similarity">
    <text evidence="1">Belongs to the metallo-dependent hydrolases superfamily. Urease alpha subunit family.</text>
</comment>
<keyword id="KW-0963">Cytoplasm</keyword>
<keyword id="KW-0378">Hydrolase</keyword>
<keyword id="KW-0479">Metal-binding</keyword>
<keyword id="KW-0533">Nickel</keyword>
<accession>A5W4B6</accession>
<name>URE1_PSEP1</name>
<sequence>MSRISRQAYADMFGPTVGDRVRLADTALWVEVEKDFTIYGEEVKFGGGKVIRDGMGQGQMLAAEAMDLVLTNALIIDHWGIVKADIGIKHGRIAVIGKAGNPDVQPGVNVPVGPGTEVIAAEGKIVTAGGVDSHIHFICPQQVDEALNSGVTTFIGGGTGPATGTNATTCTPGPWYLARMLQAADSLPINIGLLGKGNASRPDALREQIGAGAVGLKLHEDWGSTPAAIDCCLGVAEEMDIQVAIHTDTLNESGCIEDTLAAIGDRTIHTFHTEGAGGGHAPDIIRAAGQANVLPSSTNPTLPYTINTVDEHLDMLMVCHHLDPSIAEDVAFAESRIRRETIAAEDILHDMGAFAMTSSDSQAMGRVGEVVLRTWQVAHQMKLRRGPLAPDTPYSDNFRVKRYIAKYTINPALTHGIGHEVGSVEVGKLADLVLWSPAFFAVKPALVLKGGMIVTAPMGDINGSIPTPQPVHYRSMFGALGAARHATRMTFLPQAAMDRGLAEALNLRSLIGVVNGCRRVRKPDMVHNTLQPLIEVDAQTYQVRADGELLVCEPASELPLAQRYFLF</sequence>
<proteinExistence type="inferred from homology"/>
<gene>
    <name evidence="1" type="primary">ureC</name>
    <name type="ordered locus">Pput_2844</name>
</gene>
<evidence type="ECO:0000255" key="1">
    <source>
        <dbReference type="HAMAP-Rule" id="MF_01953"/>
    </source>
</evidence>
<organism>
    <name type="scientific">Pseudomonas putida (strain ATCC 700007 / DSM 6899 / JCM 31910 / BCRC 17059 / LMG 24140 / F1)</name>
    <dbReference type="NCBI Taxonomy" id="351746"/>
    <lineage>
        <taxon>Bacteria</taxon>
        <taxon>Pseudomonadati</taxon>
        <taxon>Pseudomonadota</taxon>
        <taxon>Gammaproteobacteria</taxon>
        <taxon>Pseudomonadales</taxon>
        <taxon>Pseudomonadaceae</taxon>
        <taxon>Pseudomonas</taxon>
    </lineage>
</organism>
<dbReference type="EC" id="3.5.1.5" evidence="1"/>
<dbReference type="EMBL" id="CP000712">
    <property type="protein sequence ID" value="ABQ78976.1"/>
    <property type="molecule type" value="Genomic_DNA"/>
</dbReference>
<dbReference type="SMR" id="A5W4B6"/>
<dbReference type="MEROPS" id="M38.982"/>
<dbReference type="KEGG" id="ppf:Pput_2844"/>
<dbReference type="eggNOG" id="COG0804">
    <property type="taxonomic scope" value="Bacteria"/>
</dbReference>
<dbReference type="HOGENOM" id="CLU_000980_0_0_6"/>
<dbReference type="UniPathway" id="UPA00258">
    <property type="reaction ID" value="UER00370"/>
</dbReference>
<dbReference type="GO" id="GO:0005737">
    <property type="term" value="C:cytoplasm"/>
    <property type="evidence" value="ECO:0007669"/>
    <property type="project" value="UniProtKB-SubCell"/>
</dbReference>
<dbReference type="GO" id="GO:0016151">
    <property type="term" value="F:nickel cation binding"/>
    <property type="evidence" value="ECO:0007669"/>
    <property type="project" value="UniProtKB-UniRule"/>
</dbReference>
<dbReference type="GO" id="GO:0009039">
    <property type="term" value="F:urease activity"/>
    <property type="evidence" value="ECO:0007669"/>
    <property type="project" value="UniProtKB-UniRule"/>
</dbReference>
<dbReference type="GO" id="GO:0043419">
    <property type="term" value="P:urea catabolic process"/>
    <property type="evidence" value="ECO:0007669"/>
    <property type="project" value="UniProtKB-UniRule"/>
</dbReference>
<dbReference type="CDD" id="cd00375">
    <property type="entry name" value="Urease_alpha"/>
    <property type="match status" value="1"/>
</dbReference>
<dbReference type="Gene3D" id="3.20.20.140">
    <property type="entry name" value="Metal-dependent hydrolases"/>
    <property type="match status" value="1"/>
</dbReference>
<dbReference type="Gene3D" id="2.30.40.10">
    <property type="entry name" value="Urease, subunit C, domain 1"/>
    <property type="match status" value="1"/>
</dbReference>
<dbReference type="HAMAP" id="MF_01953">
    <property type="entry name" value="Urease_alpha"/>
    <property type="match status" value="1"/>
</dbReference>
<dbReference type="InterPro" id="IPR006680">
    <property type="entry name" value="Amidohydro-rel"/>
</dbReference>
<dbReference type="InterPro" id="IPR011059">
    <property type="entry name" value="Metal-dep_hydrolase_composite"/>
</dbReference>
<dbReference type="InterPro" id="IPR032466">
    <property type="entry name" value="Metal_Hydrolase"/>
</dbReference>
<dbReference type="InterPro" id="IPR011612">
    <property type="entry name" value="Urease_alpha_N_dom"/>
</dbReference>
<dbReference type="InterPro" id="IPR050112">
    <property type="entry name" value="Urease_alpha_subunit"/>
</dbReference>
<dbReference type="InterPro" id="IPR017950">
    <property type="entry name" value="Urease_AS"/>
</dbReference>
<dbReference type="InterPro" id="IPR005848">
    <property type="entry name" value="Urease_asu"/>
</dbReference>
<dbReference type="InterPro" id="IPR017951">
    <property type="entry name" value="Urease_asu_c"/>
</dbReference>
<dbReference type="InterPro" id="IPR029754">
    <property type="entry name" value="Urease_Ni-bd"/>
</dbReference>
<dbReference type="NCBIfam" id="NF009685">
    <property type="entry name" value="PRK13206.1"/>
    <property type="match status" value="1"/>
</dbReference>
<dbReference type="NCBIfam" id="NF009686">
    <property type="entry name" value="PRK13207.1"/>
    <property type="match status" value="1"/>
</dbReference>
<dbReference type="NCBIfam" id="TIGR01792">
    <property type="entry name" value="urease_alph"/>
    <property type="match status" value="1"/>
</dbReference>
<dbReference type="PANTHER" id="PTHR43440">
    <property type="entry name" value="UREASE"/>
    <property type="match status" value="1"/>
</dbReference>
<dbReference type="PANTHER" id="PTHR43440:SF1">
    <property type="entry name" value="UREASE"/>
    <property type="match status" value="1"/>
</dbReference>
<dbReference type="Pfam" id="PF01979">
    <property type="entry name" value="Amidohydro_1"/>
    <property type="match status" value="1"/>
</dbReference>
<dbReference type="Pfam" id="PF00449">
    <property type="entry name" value="Urease_alpha"/>
    <property type="match status" value="1"/>
</dbReference>
<dbReference type="PRINTS" id="PR01752">
    <property type="entry name" value="UREASE"/>
</dbReference>
<dbReference type="SUPFAM" id="SSF51338">
    <property type="entry name" value="Composite domain of metallo-dependent hydrolases"/>
    <property type="match status" value="2"/>
</dbReference>
<dbReference type="SUPFAM" id="SSF51556">
    <property type="entry name" value="Metallo-dependent hydrolases"/>
    <property type="match status" value="1"/>
</dbReference>
<dbReference type="PROSITE" id="PS01120">
    <property type="entry name" value="UREASE_1"/>
    <property type="match status" value="1"/>
</dbReference>
<dbReference type="PROSITE" id="PS00145">
    <property type="entry name" value="UREASE_2"/>
    <property type="match status" value="1"/>
</dbReference>
<dbReference type="PROSITE" id="PS51368">
    <property type="entry name" value="UREASE_3"/>
    <property type="match status" value="1"/>
</dbReference>